<name>LAN1D_RUMFL</name>
<gene>
    <name evidence="4" type="primary">FlvA1.D</name>
</gene>
<evidence type="ECO:0000250" key="1">
    <source>
        <dbReference type="UniProtKB" id="H2A7G5"/>
    </source>
</evidence>
<evidence type="ECO:0000250" key="2">
    <source>
        <dbReference type="UniProtKB" id="P0DQM1"/>
    </source>
</evidence>
<evidence type="ECO:0000250" key="3">
    <source>
        <dbReference type="UniProtKB" id="P86475"/>
    </source>
</evidence>
<evidence type="ECO:0000303" key="4">
    <source>
    </source>
</evidence>
<evidence type="ECO:0000305" key="5">
    <source>
    </source>
</evidence>
<protein>
    <recommendedName>
        <fullName evidence="4">Lantibiotic Flvalpha.d</fullName>
    </recommendedName>
</protein>
<keyword id="KW-0044">Antibiotic</keyword>
<keyword id="KW-0929">Antimicrobial</keyword>
<keyword id="KW-0078">Bacteriocin</keyword>
<keyword id="KW-0425">Lantibiotic</keyword>
<keyword id="KW-0446">Lipid-binding</keyword>
<keyword id="KW-0964">Secreted</keyword>
<keyword id="KW-0883">Thioether bond</keyword>
<comment type="function">
    <text evidence="2 3">Lanthionine-containing peptide antibiotic (lantibiotic) only active on Gram-positive bacteria in synergy with Flvbeta peptides, which are encoded by the same operon than Flvalpha.a. Shows antibacterial activity in synergy with Flvbeta.b, Flvbeta.c, Flvbeta.e and Flvbeta.g. Does not show antibacterial activity when tested with Flvbeta.a, Flvbeta.d, Flvbeta.f and Flvbeta.h (By similarity). The bactericidal activity of lantibiotics is based on depolarization of energized bacterial cytoplasmic membranes, initiated by the formation of aqueous transmembrane pores (By similarity).</text>
</comment>
<comment type="subcellular location">
    <subcellularLocation>
        <location evidence="2">Secreted</location>
    </subcellularLocation>
</comment>
<comment type="PTM">
    <text evidence="2">The lanthionine formed by Ser-58 and Cys-68 forms a putative lipid II binding motif.</text>
</comment>
<comment type="PTM">
    <text evidence="1 2">Maturation of FlvA1 peptides involves the enzymatic conversion of Thr, and Ser into dehydrated AA and the formation of thioether bonds with cysteines. Modifications are processed by the flavecin synthetase FlvM1 (By similarity). This is followed by membrane translocation and cleavage of the modified precursor (By similarity).</text>
</comment>
<comment type="PTM">
    <text evidence="2">Contains DL-lanthionine and DL-beta-methyllanthionine, when coepressed in E.coli with the flavecin synthetase FlvM1.</text>
</comment>
<feature type="propeptide" id="PRO_0000450394" description="Cleaved by FlvT" evidence="5">
    <location>
        <begin position="1"/>
        <end position="38"/>
    </location>
</feature>
<feature type="peptide" id="PRO_0000450395" description="Lantibiotic Flvalpha.d" evidence="5">
    <location>
        <begin position="39"/>
        <end position="80"/>
    </location>
</feature>
<feature type="modified residue" description="2,3-didehydrobutyrine; by FlvM1" evidence="2">
    <location>
        <position position="43"/>
    </location>
</feature>
<feature type="modified residue" description="2,3-didehydrobutyrine; by FlvM1" evidence="2">
    <location>
        <position position="47"/>
    </location>
</feature>
<feature type="cross-link" description="Beta-methyllanthionine (Thr-Cys); by FlvM1" evidence="2">
    <location>
        <begin position="52"/>
        <end position="55"/>
    </location>
</feature>
<feature type="cross-link" description="Lanthionine (Ser-Cys); by FlvM1" evidence="2">
    <location>
        <begin position="58"/>
        <end position="68"/>
    </location>
</feature>
<feature type="cross-link" description="Beta-methyllanthionine (Thr-Cys); by FlvM1" evidence="2">
    <location>
        <begin position="69"/>
        <end position="74"/>
    </location>
</feature>
<feature type="cross-link" description="Beta-methyllanthionine (Thr-Cys); by FlvM1" evidence="2">
    <location>
        <begin position="71"/>
        <end position="78"/>
    </location>
</feature>
<accession>P0DQM4</accession>
<sequence length="80" mass="8458">MNKNPIYRSEEEAKDIACGNVAAELDENSQALDAINGAGWKQTIVCTIAQGTVGCLVSYGLGNGGYCCTYTVECSKTCNK</sequence>
<proteinExistence type="inferred from homology"/>
<organism>
    <name type="scientific">Ruminococcus flavefaciens</name>
    <dbReference type="NCBI Taxonomy" id="1265"/>
    <lineage>
        <taxon>Bacteria</taxon>
        <taxon>Bacillati</taxon>
        <taxon>Bacillota</taxon>
        <taxon>Clostridia</taxon>
        <taxon>Eubacteriales</taxon>
        <taxon>Oscillospiraceae</taxon>
        <taxon>Ruminococcus</taxon>
    </lineage>
</organism>
<reference key="1">
    <citation type="journal article" date="2016" name="Cell Chem. Biol.">
        <title>Structural characterization and bioactivity analysis of the two-component lantibiotic Flv system from a ruminant bacterium.</title>
        <authorList>
            <person name="Zhao X."/>
            <person name="van der Donk W.A."/>
        </authorList>
    </citation>
    <scope>NUCLEOTIDE SEQUENCE [GENOMIC DNA]</scope>
    <source>
        <strain>FD-1</strain>
    </source>
</reference>
<dbReference type="GO" id="GO:0005576">
    <property type="term" value="C:extracellular region"/>
    <property type="evidence" value="ECO:0007669"/>
    <property type="project" value="UniProtKB-SubCell"/>
</dbReference>
<dbReference type="GO" id="GO:0008289">
    <property type="term" value="F:lipid binding"/>
    <property type="evidence" value="ECO:0007669"/>
    <property type="project" value="UniProtKB-KW"/>
</dbReference>
<dbReference type="GO" id="GO:0005102">
    <property type="term" value="F:signaling receptor binding"/>
    <property type="evidence" value="ECO:0007669"/>
    <property type="project" value="UniProtKB-KW"/>
</dbReference>
<dbReference type="GO" id="GO:0042742">
    <property type="term" value="P:defense response to bacterium"/>
    <property type="evidence" value="ECO:0007669"/>
    <property type="project" value="UniProtKB-KW"/>
</dbReference>
<dbReference type="GO" id="GO:0031640">
    <property type="term" value="P:killing of cells of another organism"/>
    <property type="evidence" value="ECO:0007669"/>
    <property type="project" value="UniProtKB-KW"/>
</dbReference>
<dbReference type="NCBIfam" id="NF000539">
    <property type="entry name" value="plantaricin"/>
    <property type="match status" value="1"/>
</dbReference>